<name>SYY_MYCAP</name>
<evidence type="ECO:0000255" key="1">
    <source>
        <dbReference type="HAMAP-Rule" id="MF_02006"/>
    </source>
</evidence>
<feature type="chain" id="PRO_1000189310" description="Tyrosine--tRNA ligase">
    <location>
        <begin position="1"/>
        <end position="411"/>
    </location>
</feature>
<feature type="domain" description="S4 RNA-binding" evidence="1">
    <location>
        <begin position="347"/>
        <end position="411"/>
    </location>
</feature>
<feature type="short sequence motif" description="'HIGH' region">
    <location>
        <begin position="38"/>
        <end position="47"/>
    </location>
</feature>
<feature type="short sequence motif" description="'KMSKS' region">
    <location>
        <begin position="222"/>
        <end position="226"/>
    </location>
</feature>
<feature type="binding site" evidence="1">
    <location>
        <position position="33"/>
    </location>
    <ligand>
        <name>L-tyrosine</name>
        <dbReference type="ChEBI" id="CHEBI:58315"/>
    </ligand>
</feature>
<feature type="binding site" evidence="1">
    <location>
        <position position="160"/>
    </location>
    <ligand>
        <name>L-tyrosine</name>
        <dbReference type="ChEBI" id="CHEBI:58315"/>
    </ligand>
</feature>
<feature type="binding site" evidence="1">
    <location>
        <position position="164"/>
    </location>
    <ligand>
        <name>L-tyrosine</name>
        <dbReference type="ChEBI" id="CHEBI:58315"/>
    </ligand>
</feature>
<feature type="binding site" evidence="1">
    <location>
        <position position="225"/>
    </location>
    <ligand>
        <name>ATP</name>
        <dbReference type="ChEBI" id="CHEBI:30616"/>
    </ligand>
</feature>
<reference key="1">
    <citation type="journal article" date="2007" name="PLoS Genet.">
        <title>Being pathogenic, plastic, and sexual while living with a nearly minimal bacterial genome.</title>
        <authorList>
            <person name="Sirand-Pugnet P."/>
            <person name="Lartigue C."/>
            <person name="Marenda M."/>
            <person name="Jacob D."/>
            <person name="Barre A."/>
            <person name="Barbe V."/>
            <person name="Schenowitz C."/>
            <person name="Mangenot S."/>
            <person name="Couloux A."/>
            <person name="Segurens B."/>
            <person name="de Daruvar A."/>
            <person name="Blanchard A."/>
            <person name="Citti C."/>
        </authorList>
    </citation>
    <scope>NUCLEOTIDE SEQUENCE [LARGE SCALE GENOMIC DNA]</scope>
    <source>
        <strain>NCTC 10123 / CIP 59.7 / PG2</strain>
    </source>
</reference>
<gene>
    <name evidence="1" type="primary">tyrS</name>
    <name type="ordered locus">MAG7300</name>
</gene>
<keyword id="KW-0030">Aminoacyl-tRNA synthetase</keyword>
<keyword id="KW-0067">ATP-binding</keyword>
<keyword id="KW-0963">Cytoplasm</keyword>
<keyword id="KW-0436">Ligase</keyword>
<keyword id="KW-0547">Nucleotide-binding</keyword>
<keyword id="KW-0648">Protein biosynthesis</keyword>
<keyword id="KW-1185">Reference proteome</keyword>
<keyword id="KW-0694">RNA-binding</keyword>
<protein>
    <recommendedName>
        <fullName evidence="1">Tyrosine--tRNA ligase</fullName>
        <ecNumber evidence="1">6.1.1.1</ecNumber>
    </recommendedName>
    <alternativeName>
        <fullName evidence="1">Tyrosyl-tRNA synthetase</fullName>
        <shortName evidence="1">TyrRS</shortName>
    </alternativeName>
</protein>
<proteinExistence type="inferred from homology"/>
<sequence>MNILKDLEERLILKDISNKDKFANLSPSTTGVYVGFDPTAESLHLGNYILISVLLRFKEYGFKTYAVLGGATGMIGDPSFKDSERVLLDNESVNKNKSKIKAQLESFGLEVIDNYDFYKDMNVLEFLRNVGKLVNVSYMMAKESVQKRIQKGLSFTEFTYQLLQGFDFLKTYQELGVKVQLGGSDQWGNIVTGIDMISKVVGDKHEAVGVTVNLLSDENGKKIGKSTGGGALWIDKNMCSPFKMYQYLLSQKDSRIKELLYWFSFKSVSEINEVLEKHFANPSTQEAQRFLASEVVENIFGANELKQAKNITKILFDKSFDASVLTLNDLEIIENYLPTCPIRQGDSVIETLIKNKFIVSNREAREFIQAKALKIDNKEIEFDSIYSPSLFEGKYAFFKKGKKQVILFKTV</sequence>
<comment type="function">
    <text evidence="1">Catalyzes the attachment of tyrosine to tRNA(Tyr) in a two-step reaction: tyrosine is first activated by ATP to form Tyr-AMP and then transferred to the acceptor end of tRNA(Tyr).</text>
</comment>
<comment type="catalytic activity">
    <reaction evidence="1">
        <text>tRNA(Tyr) + L-tyrosine + ATP = L-tyrosyl-tRNA(Tyr) + AMP + diphosphate + H(+)</text>
        <dbReference type="Rhea" id="RHEA:10220"/>
        <dbReference type="Rhea" id="RHEA-COMP:9706"/>
        <dbReference type="Rhea" id="RHEA-COMP:9707"/>
        <dbReference type="ChEBI" id="CHEBI:15378"/>
        <dbReference type="ChEBI" id="CHEBI:30616"/>
        <dbReference type="ChEBI" id="CHEBI:33019"/>
        <dbReference type="ChEBI" id="CHEBI:58315"/>
        <dbReference type="ChEBI" id="CHEBI:78442"/>
        <dbReference type="ChEBI" id="CHEBI:78536"/>
        <dbReference type="ChEBI" id="CHEBI:456215"/>
        <dbReference type="EC" id="6.1.1.1"/>
    </reaction>
</comment>
<comment type="subunit">
    <text evidence="1">Homodimer.</text>
</comment>
<comment type="subcellular location">
    <subcellularLocation>
        <location evidence="1">Cytoplasm</location>
    </subcellularLocation>
</comment>
<comment type="similarity">
    <text evidence="1">Belongs to the class-I aminoacyl-tRNA synthetase family. TyrS type 1 subfamily.</text>
</comment>
<dbReference type="EC" id="6.1.1.1" evidence="1"/>
<dbReference type="EMBL" id="CU179680">
    <property type="protein sequence ID" value="CAL59430.1"/>
    <property type="molecule type" value="Genomic_DNA"/>
</dbReference>
<dbReference type="RefSeq" id="WP_011949883.1">
    <property type="nucleotide sequence ID" value="NC_009497.1"/>
</dbReference>
<dbReference type="SMR" id="A5IZH1"/>
<dbReference type="STRING" id="347257.MAG7300"/>
<dbReference type="GeneID" id="93358456"/>
<dbReference type="KEGG" id="maa:MAG7300"/>
<dbReference type="HOGENOM" id="CLU_024003_0_2_14"/>
<dbReference type="Proteomes" id="UP000007065">
    <property type="component" value="Chromosome"/>
</dbReference>
<dbReference type="GO" id="GO:0005829">
    <property type="term" value="C:cytosol"/>
    <property type="evidence" value="ECO:0007669"/>
    <property type="project" value="TreeGrafter"/>
</dbReference>
<dbReference type="GO" id="GO:0005524">
    <property type="term" value="F:ATP binding"/>
    <property type="evidence" value="ECO:0007669"/>
    <property type="project" value="UniProtKB-UniRule"/>
</dbReference>
<dbReference type="GO" id="GO:0003723">
    <property type="term" value="F:RNA binding"/>
    <property type="evidence" value="ECO:0007669"/>
    <property type="project" value="UniProtKB-KW"/>
</dbReference>
<dbReference type="GO" id="GO:0004831">
    <property type="term" value="F:tyrosine-tRNA ligase activity"/>
    <property type="evidence" value="ECO:0007669"/>
    <property type="project" value="UniProtKB-UniRule"/>
</dbReference>
<dbReference type="GO" id="GO:0006437">
    <property type="term" value="P:tyrosyl-tRNA aminoacylation"/>
    <property type="evidence" value="ECO:0007669"/>
    <property type="project" value="UniProtKB-UniRule"/>
</dbReference>
<dbReference type="CDD" id="cd00805">
    <property type="entry name" value="TyrRS_core"/>
    <property type="match status" value="1"/>
</dbReference>
<dbReference type="FunFam" id="1.10.240.10:FF:000001">
    <property type="entry name" value="Tyrosine--tRNA ligase"/>
    <property type="match status" value="1"/>
</dbReference>
<dbReference type="Gene3D" id="3.40.50.620">
    <property type="entry name" value="HUPs"/>
    <property type="match status" value="1"/>
</dbReference>
<dbReference type="Gene3D" id="3.10.290.10">
    <property type="entry name" value="RNA-binding S4 domain"/>
    <property type="match status" value="1"/>
</dbReference>
<dbReference type="Gene3D" id="1.10.240.10">
    <property type="entry name" value="Tyrosyl-Transfer RNA Synthetase"/>
    <property type="match status" value="1"/>
</dbReference>
<dbReference type="HAMAP" id="MF_02006">
    <property type="entry name" value="Tyr_tRNA_synth_type1"/>
    <property type="match status" value="1"/>
</dbReference>
<dbReference type="InterPro" id="IPR001412">
    <property type="entry name" value="aa-tRNA-synth_I_CS"/>
</dbReference>
<dbReference type="InterPro" id="IPR002305">
    <property type="entry name" value="aa-tRNA-synth_Ic"/>
</dbReference>
<dbReference type="InterPro" id="IPR014729">
    <property type="entry name" value="Rossmann-like_a/b/a_fold"/>
</dbReference>
<dbReference type="InterPro" id="IPR036986">
    <property type="entry name" value="S4_RNA-bd_sf"/>
</dbReference>
<dbReference type="InterPro" id="IPR054608">
    <property type="entry name" value="SYY-like_C"/>
</dbReference>
<dbReference type="InterPro" id="IPR002307">
    <property type="entry name" value="Tyr-tRNA-ligase"/>
</dbReference>
<dbReference type="InterPro" id="IPR024088">
    <property type="entry name" value="Tyr-tRNA-ligase_bac-type"/>
</dbReference>
<dbReference type="InterPro" id="IPR024107">
    <property type="entry name" value="Tyr-tRNA-ligase_bac_1"/>
</dbReference>
<dbReference type="NCBIfam" id="TIGR00234">
    <property type="entry name" value="tyrS"/>
    <property type="match status" value="1"/>
</dbReference>
<dbReference type="PANTHER" id="PTHR11766:SF0">
    <property type="entry name" value="TYROSINE--TRNA LIGASE, MITOCHONDRIAL"/>
    <property type="match status" value="1"/>
</dbReference>
<dbReference type="PANTHER" id="PTHR11766">
    <property type="entry name" value="TYROSYL-TRNA SYNTHETASE"/>
    <property type="match status" value="1"/>
</dbReference>
<dbReference type="Pfam" id="PF22421">
    <property type="entry name" value="SYY_C-terminal"/>
    <property type="match status" value="1"/>
</dbReference>
<dbReference type="Pfam" id="PF00579">
    <property type="entry name" value="tRNA-synt_1b"/>
    <property type="match status" value="1"/>
</dbReference>
<dbReference type="PRINTS" id="PR01040">
    <property type="entry name" value="TRNASYNTHTYR"/>
</dbReference>
<dbReference type="SUPFAM" id="SSF55174">
    <property type="entry name" value="Alpha-L RNA-binding motif"/>
    <property type="match status" value="1"/>
</dbReference>
<dbReference type="SUPFAM" id="SSF52374">
    <property type="entry name" value="Nucleotidylyl transferase"/>
    <property type="match status" value="1"/>
</dbReference>
<dbReference type="PROSITE" id="PS00178">
    <property type="entry name" value="AA_TRNA_LIGASE_I"/>
    <property type="match status" value="1"/>
</dbReference>
<accession>A5IZH1</accession>
<organism>
    <name type="scientific">Mycoplasmopsis agalactiae (strain NCTC 10123 / CIP 59.7 / PG2)</name>
    <name type="common">Mycoplasma agalactiae</name>
    <dbReference type="NCBI Taxonomy" id="347257"/>
    <lineage>
        <taxon>Bacteria</taxon>
        <taxon>Bacillati</taxon>
        <taxon>Mycoplasmatota</taxon>
        <taxon>Mycoplasmoidales</taxon>
        <taxon>Metamycoplasmataceae</taxon>
        <taxon>Mycoplasmopsis</taxon>
    </lineage>
</organism>